<sequence>MAEITASLVKELRERTGAGMMDCKKALTEANGDIELAIENMRKSGAIKAAKKAGNVAADGVIKTKIEGNYGYILEVNCQTDFVAKDGGFQAFADKVLDAAVAGKISDVEVLKAQFEEERVALVAKIGENINIRRIAVLEGDVLGSYQHGARIGVLVAAKGADEELVKQLAMHVAASKPEFVKPEDVSAEVVEKEYQVQLDIAMQSGKPKEIAEKMVEGRMKKFTGEVSLTGQPFVMEPSKSVGQLLKEHNADVTGFIRFEVGEGIEKVETDFAAEVAAMSKQS</sequence>
<proteinExistence type="inferred from homology"/>
<accession>B5Y1K1</accession>
<reference key="1">
    <citation type="journal article" date="2008" name="PLoS Genet.">
        <title>Complete genome sequence of the N2-fixing broad host range endophyte Klebsiella pneumoniae 342 and virulence predictions verified in mice.</title>
        <authorList>
            <person name="Fouts D.E."/>
            <person name="Tyler H.L."/>
            <person name="DeBoy R.T."/>
            <person name="Daugherty S."/>
            <person name="Ren Q."/>
            <person name="Badger J.H."/>
            <person name="Durkin A.S."/>
            <person name="Huot H."/>
            <person name="Shrivastava S."/>
            <person name="Kothari S."/>
            <person name="Dodson R.J."/>
            <person name="Mohamoud Y."/>
            <person name="Khouri H."/>
            <person name="Roesch L.F.W."/>
            <person name="Krogfelt K.A."/>
            <person name="Struve C."/>
            <person name="Triplett E.W."/>
            <person name="Methe B.A."/>
        </authorList>
    </citation>
    <scope>NUCLEOTIDE SEQUENCE [LARGE SCALE GENOMIC DNA]</scope>
    <source>
        <strain>342</strain>
    </source>
</reference>
<protein>
    <recommendedName>
        <fullName evidence="1">Elongation factor Ts</fullName>
        <shortName evidence="1">EF-Ts</shortName>
    </recommendedName>
</protein>
<dbReference type="EMBL" id="CP000964">
    <property type="protein sequence ID" value="ACI06767.1"/>
    <property type="molecule type" value="Genomic_DNA"/>
</dbReference>
<dbReference type="SMR" id="B5Y1K1"/>
<dbReference type="KEGG" id="kpe:KPK_4550"/>
<dbReference type="HOGENOM" id="CLU_047155_0_2_6"/>
<dbReference type="Proteomes" id="UP000001734">
    <property type="component" value="Chromosome"/>
</dbReference>
<dbReference type="GO" id="GO:0005737">
    <property type="term" value="C:cytoplasm"/>
    <property type="evidence" value="ECO:0007669"/>
    <property type="project" value="UniProtKB-SubCell"/>
</dbReference>
<dbReference type="GO" id="GO:0003746">
    <property type="term" value="F:translation elongation factor activity"/>
    <property type="evidence" value="ECO:0007669"/>
    <property type="project" value="UniProtKB-UniRule"/>
</dbReference>
<dbReference type="CDD" id="cd14275">
    <property type="entry name" value="UBA_EF-Ts"/>
    <property type="match status" value="1"/>
</dbReference>
<dbReference type="FunFam" id="1.10.286.20:FF:000001">
    <property type="entry name" value="Elongation factor Ts"/>
    <property type="match status" value="1"/>
</dbReference>
<dbReference type="FunFam" id="1.10.8.10:FF:000001">
    <property type="entry name" value="Elongation factor Ts"/>
    <property type="match status" value="1"/>
</dbReference>
<dbReference type="FunFam" id="3.30.479.20:FF:000001">
    <property type="entry name" value="Elongation factor Ts"/>
    <property type="match status" value="1"/>
</dbReference>
<dbReference type="Gene3D" id="1.10.286.20">
    <property type="match status" value="1"/>
</dbReference>
<dbReference type="Gene3D" id="1.10.8.10">
    <property type="entry name" value="DNA helicase RuvA subunit, C-terminal domain"/>
    <property type="match status" value="1"/>
</dbReference>
<dbReference type="Gene3D" id="3.30.479.20">
    <property type="entry name" value="Elongation factor Ts, dimerisation domain"/>
    <property type="match status" value="2"/>
</dbReference>
<dbReference type="HAMAP" id="MF_00050">
    <property type="entry name" value="EF_Ts"/>
    <property type="match status" value="1"/>
</dbReference>
<dbReference type="InterPro" id="IPR036402">
    <property type="entry name" value="EF-Ts_dimer_sf"/>
</dbReference>
<dbReference type="InterPro" id="IPR001816">
    <property type="entry name" value="Transl_elong_EFTs/EF1B"/>
</dbReference>
<dbReference type="InterPro" id="IPR014039">
    <property type="entry name" value="Transl_elong_EFTs/EF1B_dimer"/>
</dbReference>
<dbReference type="InterPro" id="IPR018101">
    <property type="entry name" value="Transl_elong_Ts_CS"/>
</dbReference>
<dbReference type="InterPro" id="IPR009060">
    <property type="entry name" value="UBA-like_sf"/>
</dbReference>
<dbReference type="NCBIfam" id="TIGR00116">
    <property type="entry name" value="tsf"/>
    <property type="match status" value="1"/>
</dbReference>
<dbReference type="PANTHER" id="PTHR11741">
    <property type="entry name" value="ELONGATION FACTOR TS"/>
    <property type="match status" value="1"/>
</dbReference>
<dbReference type="PANTHER" id="PTHR11741:SF0">
    <property type="entry name" value="ELONGATION FACTOR TS, MITOCHONDRIAL"/>
    <property type="match status" value="1"/>
</dbReference>
<dbReference type="Pfam" id="PF00889">
    <property type="entry name" value="EF_TS"/>
    <property type="match status" value="1"/>
</dbReference>
<dbReference type="SUPFAM" id="SSF54713">
    <property type="entry name" value="Elongation factor Ts (EF-Ts), dimerisation domain"/>
    <property type="match status" value="2"/>
</dbReference>
<dbReference type="SUPFAM" id="SSF46934">
    <property type="entry name" value="UBA-like"/>
    <property type="match status" value="1"/>
</dbReference>
<dbReference type="PROSITE" id="PS01126">
    <property type="entry name" value="EF_TS_1"/>
    <property type="match status" value="1"/>
</dbReference>
<dbReference type="PROSITE" id="PS01127">
    <property type="entry name" value="EF_TS_2"/>
    <property type="match status" value="1"/>
</dbReference>
<evidence type="ECO:0000255" key="1">
    <source>
        <dbReference type="HAMAP-Rule" id="MF_00050"/>
    </source>
</evidence>
<keyword id="KW-0963">Cytoplasm</keyword>
<keyword id="KW-0251">Elongation factor</keyword>
<keyword id="KW-0648">Protein biosynthesis</keyword>
<organism>
    <name type="scientific">Klebsiella pneumoniae (strain 342)</name>
    <dbReference type="NCBI Taxonomy" id="507522"/>
    <lineage>
        <taxon>Bacteria</taxon>
        <taxon>Pseudomonadati</taxon>
        <taxon>Pseudomonadota</taxon>
        <taxon>Gammaproteobacteria</taxon>
        <taxon>Enterobacterales</taxon>
        <taxon>Enterobacteriaceae</taxon>
        <taxon>Klebsiella/Raoultella group</taxon>
        <taxon>Klebsiella</taxon>
        <taxon>Klebsiella pneumoniae complex</taxon>
    </lineage>
</organism>
<feature type="chain" id="PRO_1000116748" description="Elongation factor Ts">
    <location>
        <begin position="1"/>
        <end position="283"/>
    </location>
</feature>
<feature type="region of interest" description="Involved in Mg(2+) ion dislocation from EF-Tu" evidence="1">
    <location>
        <begin position="80"/>
        <end position="83"/>
    </location>
</feature>
<name>EFTS_KLEP3</name>
<gene>
    <name evidence="1" type="primary">tsf</name>
    <name type="ordered locus">KPK_4550</name>
</gene>
<comment type="function">
    <text evidence="1">Associates with the EF-Tu.GDP complex and induces the exchange of GDP to GTP. It remains bound to the aminoacyl-tRNA.EF-Tu.GTP complex up to the GTP hydrolysis stage on the ribosome.</text>
</comment>
<comment type="subcellular location">
    <subcellularLocation>
        <location evidence="1">Cytoplasm</location>
    </subcellularLocation>
</comment>
<comment type="similarity">
    <text evidence="1">Belongs to the EF-Ts family.</text>
</comment>